<sequence>MKDTYRHQGKRQQLVKTVKKKGITDEKVLGAIGNIPRHLFMDSSFEDHAYQDKAFPIAADQTISQPYTVAFQSELLEIKKGEKVLEVGTGSGYQTAVLCLLGAKVYSIERQRELYKKTKSFLSKLGYRPKYLSFGDGYKGIPEYAPYDKIIVTAGAPEVPRDLLSQLKVGGRLVIPVGTDVQTMTLFIRKSAKEFDKNEFGAFRFVPLLEDKN</sequence>
<gene>
    <name evidence="1" type="primary">pcm</name>
    <name type="ordered locus">GFO_0668</name>
</gene>
<protein>
    <recommendedName>
        <fullName evidence="1">Protein-L-isoaspartate O-methyltransferase</fullName>
        <ecNumber evidence="1">2.1.1.77</ecNumber>
    </recommendedName>
    <alternativeName>
        <fullName evidence="1">L-isoaspartyl protein carboxyl methyltransferase</fullName>
    </alternativeName>
    <alternativeName>
        <fullName evidence="1">Protein L-isoaspartyl methyltransferase</fullName>
    </alternativeName>
    <alternativeName>
        <fullName evidence="1">Protein-beta-aspartate methyltransferase</fullName>
        <shortName evidence="1">PIMT</shortName>
    </alternativeName>
</protein>
<proteinExistence type="inferred from homology"/>
<evidence type="ECO:0000255" key="1">
    <source>
        <dbReference type="HAMAP-Rule" id="MF_00090"/>
    </source>
</evidence>
<keyword id="KW-0963">Cytoplasm</keyword>
<keyword id="KW-0489">Methyltransferase</keyword>
<keyword id="KW-0949">S-adenosyl-L-methionine</keyword>
<keyword id="KW-0808">Transferase</keyword>
<accession>A0LZ51</accession>
<name>PIMT_CHRFK</name>
<organism>
    <name type="scientific">Christiangramia forsetii (strain DSM 17595 / CGMCC 1.15422 / KT0803)</name>
    <name type="common">Gramella forsetii</name>
    <dbReference type="NCBI Taxonomy" id="411154"/>
    <lineage>
        <taxon>Bacteria</taxon>
        <taxon>Pseudomonadati</taxon>
        <taxon>Bacteroidota</taxon>
        <taxon>Flavobacteriia</taxon>
        <taxon>Flavobacteriales</taxon>
        <taxon>Flavobacteriaceae</taxon>
        <taxon>Christiangramia</taxon>
    </lineage>
</organism>
<comment type="function">
    <text evidence="1">Catalyzes the methyl esterification of L-isoaspartyl residues in peptides and proteins that result from spontaneous decomposition of normal L-aspartyl and L-asparaginyl residues. It plays a role in the repair and/or degradation of damaged proteins.</text>
</comment>
<comment type="catalytic activity">
    <reaction evidence="1">
        <text>[protein]-L-isoaspartate + S-adenosyl-L-methionine = [protein]-L-isoaspartate alpha-methyl ester + S-adenosyl-L-homocysteine</text>
        <dbReference type="Rhea" id="RHEA:12705"/>
        <dbReference type="Rhea" id="RHEA-COMP:12143"/>
        <dbReference type="Rhea" id="RHEA-COMP:12144"/>
        <dbReference type="ChEBI" id="CHEBI:57856"/>
        <dbReference type="ChEBI" id="CHEBI:59789"/>
        <dbReference type="ChEBI" id="CHEBI:90596"/>
        <dbReference type="ChEBI" id="CHEBI:90598"/>
        <dbReference type="EC" id="2.1.1.77"/>
    </reaction>
</comment>
<comment type="subcellular location">
    <subcellularLocation>
        <location evidence="1">Cytoplasm</location>
    </subcellularLocation>
</comment>
<comment type="similarity">
    <text evidence="1">Belongs to the methyltransferase superfamily. L-isoaspartyl/D-aspartyl protein methyltransferase family.</text>
</comment>
<feature type="chain" id="PRO_0000351865" description="Protein-L-isoaspartate O-methyltransferase">
    <location>
        <begin position="1"/>
        <end position="213"/>
    </location>
</feature>
<feature type="active site" evidence="1">
    <location>
        <position position="64"/>
    </location>
</feature>
<reference key="1">
    <citation type="journal article" date="2006" name="Environ. Microbiol.">
        <title>Whole genome analysis of the marine Bacteroidetes'Gramella forsetii' reveals adaptations to degradation of polymeric organic matter.</title>
        <authorList>
            <person name="Bauer M."/>
            <person name="Kube M."/>
            <person name="Teeling H."/>
            <person name="Richter M."/>
            <person name="Lombardot T."/>
            <person name="Allers E."/>
            <person name="Wuerdemann C.A."/>
            <person name="Quast C."/>
            <person name="Kuhl H."/>
            <person name="Knaust F."/>
            <person name="Woebken D."/>
            <person name="Bischof K."/>
            <person name="Mussmann M."/>
            <person name="Choudhuri J.V."/>
            <person name="Meyer F."/>
            <person name="Reinhardt R."/>
            <person name="Amann R.I."/>
            <person name="Gloeckner F.O."/>
        </authorList>
    </citation>
    <scope>NUCLEOTIDE SEQUENCE [LARGE SCALE GENOMIC DNA]</scope>
    <source>
        <strain>DSM 17595 / CGMCC 1.15422 / KT0803</strain>
    </source>
</reference>
<dbReference type="EC" id="2.1.1.77" evidence="1"/>
<dbReference type="EMBL" id="CU207366">
    <property type="protein sequence ID" value="CAL65646.1"/>
    <property type="molecule type" value="Genomic_DNA"/>
</dbReference>
<dbReference type="RefSeq" id="WP_011708583.1">
    <property type="nucleotide sequence ID" value="NC_008571.1"/>
</dbReference>
<dbReference type="SMR" id="A0LZ51"/>
<dbReference type="STRING" id="411154.GFO_0668"/>
<dbReference type="KEGG" id="gfo:GFO_0668"/>
<dbReference type="eggNOG" id="COG2518">
    <property type="taxonomic scope" value="Bacteria"/>
</dbReference>
<dbReference type="HOGENOM" id="CLU_055432_2_0_10"/>
<dbReference type="OrthoDB" id="9810066at2"/>
<dbReference type="Proteomes" id="UP000000755">
    <property type="component" value="Chromosome"/>
</dbReference>
<dbReference type="GO" id="GO:0005737">
    <property type="term" value="C:cytoplasm"/>
    <property type="evidence" value="ECO:0007669"/>
    <property type="project" value="UniProtKB-SubCell"/>
</dbReference>
<dbReference type="GO" id="GO:0004719">
    <property type="term" value="F:protein-L-isoaspartate (D-aspartate) O-methyltransferase activity"/>
    <property type="evidence" value="ECO:0007669"/>
    <property type="project" value="UniProtKB-UniRule"/>
</dbReference>
<dbReference type="GO" id="GO:0032259">
    <property type="term" value="P:methylation"/>
    <property type="evidence" value="ECO:0007669"/>
    <property type="project" value="UniProtKB-KW"/>
</dbReference>
<dbReference type="GO" id="GO:0036211">
    <property type="term" value="P:protein modification process"/>
    <property type="evidence" value="ECO:0007669"/>
    <property type="project" value="UniProtKB-UniRule"/>
</dbReference>
<dbReference type="GO" id="GO:0030091">
    <property type="term" value="P:protein repair"/>
    <property type="evidence" value="ECO:0007669"/>
    <property type="project" value="UniProtKB-UniRule"/>
</dbReference>
<dbReference type="CDD" id="cd02440">
    <property type="entry name" value="AdoMet_MTases"/>
    <property type="match status" value="1"/>
</dbReference>
<dbReference type="FunFam" id="3.40.50.150:FF:000010">
    <property type="entry name" value="Protein-L-isoaspartate O-methyltransferase"/>
    <property type="match status" value="1"/>
</dbReference>
<dbReference type="Gene3D" id="3.40.50.150">
    <property type="entry name" value="Vaccinia Virus protein VP39"/>
    <property type="match status" value="1"/>
</dbReference>
<dbReference type="HAMAP" id="MF_00090">
    <property type="entry name" value="PIMT"/>
    <property type="match status" value="1"/>
</dbReference>
<dbReference type="InterPro" id="IPR000682">
    <property type="entry name" value="PCMT"/>
</dbReference>
<dbReference type="InterPro" id="IPR029063">
    <property type="entry name" value="SAM-dependent_MTases_sf"/>
</dbReference>
<dbReference type="NCBIfam" id="TIGR00080">
    <property type="entry name" value="pimt"/>
    <property type="match status" value="1"/>
</dbReference>
<dbReference type="NCBIfam" id="NF001453">
    <property type="entry name" value="PRK00312.1"/>
    <property type="match status" value="1"/>
</dbReference>
<dbReference type="PANTHER" id="PTHR11579">
    <property type="entry name" value="PROTEIN-L-ISOASPARTATE O-METHYLTRANSFERASE"/>
    <property type="match status" value="1"/>
</dbReference>
<dbReference type="PANTHER" id="PTHR11579:SF0">
    <property type="entry name" value="PROTEIN-L-ISOASPARTATE(D-ASPARTATE) O-METHYLTRANSFERASE"/>
    <property type="match status" value="1"/>
</dbReference>
<dbReference type="Pfam" id="PF01135">
    <property type="entry name" value="PCMT"/>
    <property type="match status" value="1"/>
</dbReference>
<dbReference type="SUPFAM" id="SSF53335">
    <property type="entry name" value="S-adenosyl-L-methionine-dependent methyltransferases"/>
    <property type="match status" value="1"/>
</dbReference>